<sequence>MKTPRLPIAIQQAVMRRLRENLAQANLKLDRHYPEPKLVYTQRGTSAGTAWLESYEIRLNPVLLLENIDTFIAEVVPHELAHLLVWKHFGRKAPHGKEWKWMMESVLGVPARRTHQFALQSVRRNTFPYHCQCQQHQLTVRRHNRVVRGEAVYRCVHCGEPLVAG</sequence>
<comment type="cofactor">
    <cofactor evidence="1">
        <name>Zn(2+)</name>
        <dbReference type="ChEBI" id="CHEBI:29105"/>
    </cofactor>
    <text evidence="1">Binds 1 zinc ion.</text>
</comment>
<comment type="subcellular location">
    <subcellularLocation>
        <location evidence="1">Cytoplasm</location>
    </subcellularLocation>
</comment>
<comment type="similarity">
    <text evidence="1">Belongs to the SprT family.</text>
</comment>
<keyword id="KW-0963">Cytoplasm</keyword>
<keyword id="KW-0479">Metal-binding</keyword>
<keyword id="KW-0862">Zinc</keyword>
<protein>
    <recommendedName>
        <fullName evidence="1">Protein SprT</fullName>
    </recommendedName>
</protein>
<evidence type="ECO:0000255" key="1">
    <source>
        <dbReference type="HAMAP-Rule" id="MF_00746"/>
    </source>
</evidence>
<feature type="chain" id="PRO_1000133251" description="Protein SprT">
    <location>
        <begin position="1"/>
        <end position="165"/>
    </location>
</feature>
<feature type="domain" description="SprT-like" evidence="1">
    <location>
        <begin position="22"/>
        <end position="163"/>
    </location>
</feature>
<feature type="active site" evidence="1">
    <location>
        <position position="79"/>
    </location>
</feature>
<feature type="binding site" evidence="1">
    <location>
        <position position="78"/>
    </location>
    <ligand>
        <name>Zn(2+)</name>
        <dbReference type="ChEBI" id="CHEBI:29105"/>
    </ligand>
</feature>
<feature type="binding site" evidence="1">
    <location>
        <position position="82"/>
    </location>
    <ligand>
        <name>Zn(2+)</name>
        <dbReference type="ChEBI" id="CHEBI:29105"/>
    </ligand>
</feature>
<gene>
    <name evidence="1" type="primary">sprT</name>
    <name type="ordered locus">SG2986</name>
</gene>
<name>SPRT_SALG2</name>
<proteinExistence type="inferred from homology"/>
<dbReference type="EMBL" id="AM933173">
    <property type="protein sequence ID" value="CAR38791.1"/>
    <property type="molecule type" value="Genomic_DNA"/>
</dbReference>
<dbReference type="RefSeq" id="WP_000856775.1">
    <property type="nucleotide sequence ID" value="NC_011274.1"/>
</dbReference>
<dbReference type="KEGG" id="seg:SG2986"/>
<dbReference type="HOGENOM" id="CLU_113336_0_1_6"/>
<dbReference type="Proteomes" id="UP000008321">
    <property type="component" value="Chromosome"/>
</dbReference>
<dbReference type="GO" id="GO:0005737">
    <property type="term" value="C:cytoplasm"/>
    <property type="evidence" value="ECO:0007669"/>
    <property type="project" value="UniProtKB-SubCell"/>
</dbReference>
<dbReference type="GO" id="GO:0008270">
    <property type="term" value="F:zinc ion binding"/>
    <property type="evidence" value="ECO:0007669"/>
    <property type="project" value="UniProtKB-UniRule"/>
</dbReference>
<dbReference type="GO" id="GO:0006950">
    <property type="term" value="P:response to stress"/>
    <property type="evidence" value="ECO:0007669"/>
    <property type="project" value="UniProtKB-ARBA"/>
</dbReference>
<dbReference type="HAMAP" id="MF_00746">
    <property type="entry name" value="SprT"/>
    <property type="match status" value="1"/>
</dbReference>
<dbReference type="InterPro" id="IPR006640">
    <property type="entry name" value="SprT-like_domain"/>
</dbReference>
<dbReference type="InterPro" id="IPR035240">
    <property type="entry name" value="SprT_Zn_ribbon"/>
</dbReference>
<dbReference type="InterPro" id="IPR023483">
    <property type="entry name" value="Uncharacterised_SprT"/>
</dbReference>
<dbReference type="NCBIfam" id="NF003421">
    <property type="entry name" value="PRK04860.1"/>
    <property type="match status" value="1"/>
</dbReference>
<dbReference type="PANTHER" id="PTHR38773">
    <property type="entry name" value="PROTEIN SPRT"/>
    <property type="match status" value="1"/>
</dbReference>
<dbReference type="PANTHER" id="PTHR38773:SF1">
    <property type="entry name" value="PROTEIN SPRT"/>
    <property type="match status" value="1"/>
</dbReference>
<dbReference type="Pfam" id="PF10263">
    <property type="entry name" value="SprT-like"/>
    <property type="match status" value="1"/>
</dbReference>
<dbReference type="Pfam" id="PF17283">
    <property type="entry name" value="Zn_ribbon_SprT"/>
    <property type="match status" value="1"/>
</dbReference>
<dbReference type="SMART" id="SM00731">
    <property type="entry name" value="SprT"/>
    <property type="match status" value="1"/>
</dbReference>
<dbReference type="PROSITE" id="PS00142">
    <property type="entry name" value="ZINC_PROTEASE"/>
    <property type="match status" value="1"/>
</dbReference>
<reference key="1">
    <citation type="journal article" date="2008" name="Genome Res.">
        <title>Comparative genome analysis of Salmonella enteritidis PT4 and Salmonella gallinarum 287/91 provides insights into evolutionary and host adaptation pathways.</title>
        <authorList>
            <person name="Thomson N.R."/>
            <person name="Clayton D.J."/>
            <person name="Windhorst D."/>
            <person name="Vernikos G."/>
            <person name="Davidson S."/>
            <person name="Churcher C."/>
            <person name="Quail M.A."/>
            <person name="Stevens M."/>
            <person name="Jones M.A."/>
            <person name="Watson M."/>
            <person name="Barron A."/>
            <person name="Layton A."/>
            <person name="Pickard D."/>
            <person name="Kingsley R.A."/>
            <person name="Bignell A."/>
            <person name="Clark L."/>
            <person name="Harris B."/>
            <person name="Ormond D."/>
            <person name="Abdellah Z."/>
            <person name="Brooks K."/>
            <person name="Cherevach I."/>
            <person name="Chillingworth T."/>
            <person name="Woodward J."/>
            <person name="Norberczak H."/>
            <person name="Lord A."/>
            <person name="Arrowsmith C."/>
            <person name="Jagels K."/>
            <person name="Moule S."/>
            <person name="Mungall K."/>
            <person name="Saunders M."/>
            <person name="Whitehead S."/>
            <person name="Chabalgoity J.A."/>
            <person name="Maskell D."/>
            <person name="Humphreys T."/>
            <person name="Roberts M."/>
            <person name="Barrow P.A."/>
            <person name="Dougan G."/>
            <person name="Parkhill J."/>
        </authorList>
    </citation>
    <scope>NUCLEOTIDE SEQUENCE [LARGE SCALE GENOMIC DNA]</scope>
    <source>
        <strain>287/91 / NCTC 13346</strain>
    </source>
</reference>
<accession>B5RE52</accession>
<organism>
    <name type="scientific">Salmonella gallinarum (strain 287/91 / NCTC 13346)</name>
    <dbReference type="NCBI Taxonomy" id="550538"/>
    <lineage>
        <taxon>Bacteria</taxon>
        <taxon>Pseudomonadati</taxon>
        <taxon>Pseudomonadota</taxon>
        <taxon>Gammaproteobacteria</taxon>
        <taxon>Enterobacterales</taxon>
        <taxon>Enterobacteriaceae</taxon>
        <taxon>Salmonella</taxon>
    </lineage>
</organism>